<sequence>MSENLYNDVDPIETRDWVQAIESVIRREGHKRAHFLIEQVLKTAKINRKEFFRSSFTSDYINTISREDEYEYPGNLILEKRIRSAIRWNAIMMVLRASKKNLELGGHLSSFQSSATIYEVCFNHFFQAKNHKDGGDLVYFQGHISPGIYARSFLEGRLSEEQIDNFRQEVDGIGLSSYPHPKLMPNFWQFPTVSMGLGPLCAIYQAKFLKYLHNRELKNTSKQIVYAFLGDGEMDEPESKGAISIAVREKLDNLIFIINCNLQRLDGPVVGNGKIVNELESFFYGAGWKVIKVIWGSRWDCLLKKDTSGKLIQLMNETVDGDYQTFKSKDGAYVRKYFFGKYKETYDLVKDMTDEEIWKLNRGGHDPKKMFNALKKAKETKYKPTVILAHTVKGYGMGVIAEGKNIAHQIKKININGIIHIRDRFNIPVSNDEINKLPYVTFKKNSEEYCYIHSQRKKLGGYIPFRLSSFTGKLILPKLIDFQSLLEEQKKDISTTVAFIRVLNIILKNNSIKHLIVPIIADEARTFGMEGLFRKIGIYSSSGQKYTPQDREQLAYYKEEKKGQILQEGINELGAASSWLAAATSYSTNDFPMILFYIYYSIFGFQRIGDLFWAAGDQQARGFLIGGTSGRTTLNGEGLQHEDGHSHIQSLTIPNCISYDPAFAYEVAVIIQDGLRRMYGPSQENIYYYITTINENYYMPAMPIGVEEGICKGIYKLKTLHGTTSKVQLIGSGAILRSVCEAAEILLKDYSITTDIYSVTSFTELARNGEDCERWNMLHPNEKNKIAYVKQIMNKNPTVAATDYMKLFAEQIRHYIPSQEYHVLGTDGFGRSDSRDKLRDHFEVNAYYIVIAALNLLANINDIKKKVVEDAIMKFNIDANKINPRLS</sequence>
<comment type="function">
    <text evidence="1">Component of the pyruvate dehydrogenase (PDH) complex, that catalyzes the overall conversion of pyruvate to acetyl-CoA and CO(2).</text>
</comment>
<comment type="catalytic activity">
    <reaction>
        <text>N(6)-[(R)-lipoyl]-L-lysyl-[protein] + pyruvate + H(+) = N(6)-[(R)-S(8)-acetyldihydrolipoyl]-L-lysyl-[protein] + CO2</text>
        <dbReference type="Rhea" id="RHEA:19189"/>
        <dbReference type="Rhea" id="RHEA-COMP:10474"/>
        <dbReference type="Rhea" id="RHEA-COMP:10478"/>
        <dbReference type="ChEBI" id="CHEBI:15361"/>
        <dbReference type="ChEBI" id="CHEBI:15378"/>
        <dbReference type="ChEBI" id="CHEBI:16526"/>
        <dbReference type="ChEBI" id="CHEBI:83099"/>
        <dbReference type="ChEBI" id="CHEBI:83111"/>
        <dbReference type="EC" id="1.2.4.1"/>
    </reaction>
</comment>
<comment type="cofactor">
    <cofactor evidence="1">
        <name>thiamine diphosphate</name>
        <dbReference type="ChEBI" id="CHEBI:58937"/>
    </cofactor>
</comment>
<comment type="subunit">
    <text evidence="1">Homodimer. Part of the PDH complex, consisting of multiple copies of pyruvate dehydrogenase (E1), dihydrolipoamide acetyltransferase (E2) and lipoamide dehydrogenase (E3).</text>
</comment>
<organism>
    <name type="scientific">Buchnera aphidicola subsp. Acyrthosiphon pisum (strain APS)</name>
    <name type="common">Acyrthosiphon pisum symbiotic bacterium</name>
    <dbReference type="NCBI Taxonomy" id="107806"/>
    <lineage>
        <taxon>Bacteria</taxon>
        <taxon>Pseudomonadati</taxon>
        <taxon>Pseudomonadota</taxon>
        <taxon>Gammaproteobacteria</taxon>
        <taxon>Enterobacterales</taxon>
        <taxon>Erwiniaceae</taxon>
        <taxon>Buchnera</taxon>
    </lineage>
</organism>
<feature type="chain" id="PRO_0000162240" description="Pyruvate dehydrogenase E1 component">
    <location>
        <begin position="1"/>
        <end position="887"/>
    </location>
</feature>
<dbReference type="EC" id="1.2.4.1"/>
<dbReference type="EMBL" id="BA000003">
    <property type="protein sequence ID" value="BAB12922.1"/>
    <property type="molecule type" value="Genomic_DNA"/>
</dbReference>
<dbReference type="RefSeq" id="NP_240036.1">
    <property type="nucleotide sequence ID" value="NC_002528.1"/>
</dbReference>
<dbReference type="RefSeq" id="WP_010896002.1">
    <property type="nucleotide sequence ID" value="NC_002528.1"/>
</dbReference>
<dbReference type="SMR" id="P57301"/>
<dbReference type="STRING" id="563178.BUAP5A_202"/>
<dbReference type="EnsemblBacteria" id="BAB12922">
    <property type="protein sequence ID" value="BAB12922"/>
    <property type="gene ID" value="BAB12922"/>
</dbReference>
<dbReference type="KEGG" id="buc:BU205"/>
<dbReference type="PATRIC" id="fig|107806.10.peg.216"/>
<dbReference type="eggNOG" id="COG2609">
    <property type="taxonomic scope" value="Bacteria"/>
</dbReference>
<dbReference type="HOGENOM" id="CLU_009154_2_0_6"/>
<dbReference type="Proteomes" id="UP000001806">
    <property type="component" value="Chromosome"/>
</dbReference>
<dbReference type="GO" id="GO:0004739">
    <property type="term" value="F:pyruvate dehydrogenase (acetyl-transferring) activity"/>
    <property type="evidence" value="ECO:0007669"/>
    <property type="project" value="UniProtKB-EC"/>
</dbReference>
<dbReference type="CDD" id="cd02017">
    <property type="entry name" value="TPP_E1_EcPDC_like"/>
    <property type="match status" value="1"/>
</dbReference>
<dbReference type="FunFam" id="3.40.50.970:FF:000009">
    <property type="entry name" value="Pyruvate dehydrogenase E1 component"/>
    <property type="match status" value="1"/>
</dbReference>
<dbReference type="FunFam" id="3.40.50.970:FF:000011">
    <property type="entry name" value="Pyruvate dehydrogenase E1 component"/>
    <property type="match status" value="1"/>
</dbReference>
<dbReference type="Gene3D" id="3.40.50.920">
    <property type="match status" value="1"/>
</dbReference>
<dbReference type="Gene3D" id="3.40.50.970">
    <property type="match status" value="2"/>
</dbReference>
<dbReference type="InterPro" id="IPR035807">
    <property type="entry name" value="PDC_E1_N"/>
</dbReference>
<dbReference type="InterPro" id="IPR051157">
    <property type="entry name" value="PDH/Transketolase"/>
</dbReference>
<dbReference type="InterPro" id="IPR004660">
    <property type="entry name" value="PDH_E1"/>
</dbReference>
<dbReference type="InterPro" id="IPR041621">
    <property type="entry name" value="PDH_E1_M"/>
</dbReference>
<dbReference type="InterPro" id="IPR029061">
    <property type="entry name" value="THDP-binding"/>
</dbReference>
<dbReference type="InterPro" id="IPR009014">
    <property type="entry name" value="Transketo_C/PFOR_II"/>
</dbReference>
<dbReference type="InterPro" id="IPR055152">
    <property type="entry name" value="Transketolase-like_C_2"/>
</dbReference>
<dbReference type="InterPro" id="IPR005474">
    <property type="entry name" value="Transketolase_N"/>
</dbReference>
<dbReference type="NCBIfam" id="TIGR00759">
    <property type="entry name" value="aceE"/>
    <property type="match status" value="1"/>
</dbReference>
<dbReference type="PANTHER" id="PTHR43825">
    <property type="entry name" value="PYRUVATE DEHYDROGENASE E1 COMPONENT"/>
    <property type="match status" value="1"/>
</dbReference>
<dbReference type="PANTHER" id="PTHR43825:SF3">
    <property type="entry name" value="PYRUVATE DEHYDROGENASE E1 COMPONENT"/>
    <property type="match status" value="1"/>
</dbReference>
<dbReference type="Pfam" id="PF17831">
    <property type="entry name" value="PDH_E1_M"/>
    <property type="match status" value="1"/>
</dbReference>
<dbReference type="Pfam" id="PF22613">
    <property type="entry name" value="Transketolase_C_1"/>
    <property type="match status" value="1"/>
</dbReference>
<dbReference type="Pfam" id="PF00456">
    <property type="entry name" value="Transketolase_N"/>
    <property type="match status" value="1"/>
</dbReference>
<dbReference type="PIRSF" id="PIRSF000156">
    <property type="entry name" value="Pyruvate_dh_E1"/>
    <property type="match status" value="1"/>
</dbReference>
<dbReference type="SUPFAM" id="SSF52518">
    <property type="entry name" value="Thiamin diphosphate-binding fold (THDP-binding)"/>
    <property type="match status" value="2"/>
</dbReference>
<dbReference type="SUPFAM" id="SSF52922">
    <property type="entry name" value="TK C-terminal domain-like"/>
    <property type="match status" value="1"/>
</dbReference>
<evidence type="ECO:0000250" key="1"/>
<protein>
    <recommendedName>
        <fullName>Pyruvate dehydrogenase E1 component</fullName>
        <shortName>PDH E1 component</shortName>
        <ecNumber>1.2.4.1</ecNumber>
    </recommendedName>
</protein>
<gene>
    <name type="primary">aceE</name>
    <name type="ordered locus">BU205</name>
</gene>
<reference key="1">
    <citation type="journal article" date="2000" name="Nature">
        <title>Genome sequence of the endocellular bacterial symbiont of aphids Buchnera sp. APS.</title>
        <authorList>
            <person name="Shigenobu S."/>
            <person name="Watanabe H."/>
            <person name="Hattori M."/>
            <person name="Sakaki Y."/>
            <person name="Ishikawa H."/>
        </authorList>
    </citation>
    <scope>NUCLEOTIDE SEQUENCE [LARGE SCALE GENOMIC DNA]</scope>
    <source>
        <strain>APS</strain>
    </source>
</reference>
<accession>P57301</accession>
<proteinExistence type="inferred from homology"/>
<name>ODP1_BUCAI</name>
<keyword id="KW-0560">Oxidoreductase</keyword>
<keyword id="KW-0670">Pyruvate</keyword>
<keyword id="KW-1185">Reference proteome</keyword>
<keyword id="KW-0786">Thiamine pyrophosphate</keyword>